<comment type="subunit">
    <text evidence="1">Part of the 50S ribosomal subunit.</text>
</comment>
<comment type="similarity">
    <text evidence="1">Belongs to the bacterial ribosomal protein bL31 family. Type B subfamily.</text>
</comment>
<name>RL31B_SALPC</name>
<evidence type="ECO:0000255" key="1">
    <source>
        <dbReference type="HAMAP-Rule" id="MF_00502"/>
    </source>
</evidence>
<evidence type="ECO:0000305" key="2"/>
<dbReference type="EMBL" id="CP000857">
    <property type="protein sequence ID" value="ACN44663.1"/>
    <property type="molecule type" value="Genomic_DNA"/>
</dbReference>
<dbReference type="RefSeq" id="WP_000801415.1">
    <property type="nucleotide sequence ID" value="NC_012125.1"/>
</dbReference>
<dbReference type="SMR" id="C0Q7Z3"/>
<dbReference type="KEGG" id="sei:SPC_0483"/>
<dbReference type="HOGENOM" id="CLU_114306_2_1_6"/>
<dbReference type="Proteomes" id="UP000001599">
    <property type="component" value="Chromosome"/>
</dbReference>
<dbReference type="GO" id="GO:1990904">
    <property type="term" value="C:ribonucleoprotein complex"/>
    <property type="evidence" value="ECO:0007669"/>
    <property type="project" value="UniProtKB-KW"/>
</dbReference>
<dbReference type="GO" id="GO:0005840">
    <property type="term" value="C:ribosome"/>
    <property type="evidence" value="ECO:0007669"/>
    <property type="project" value="UniProtKB-KW"/>
</dbReference>
<dbReference type="GO" id="GO:0003735">
    <property type="term" value="F:structural constituent of ribosome"/>
    <property type="evidence" value="ECO:0007669"/>
    <property type="project" value="InterPro"/>
</dbReference>
<dbReference type="GO" id="GO:0006412">
    <property type="term" value="P:translation"/>
    <property type="evidence" value="ECO:0007669"/>
    <property type="project" value="UniProtKB-UniRule"/>
</dbReference>
<dbReference type="Gene3D" id="4.10.830.30">
    <property type="entry name" value="Ribosomal protein L31"/>
    <property type="match status" value="1"/>
</dbReference>
<dbReference type="HAMAP" id="MF_00502">
    <property type="entry name" value="Ribosomal_bL31_2"/>
    <property type="match status" value="1"/>
</dbReference>
<dbReference type="InterPro" id="IPR034704">
    <property type="entry name" value="Ribosomal_bL28/bL31-like_sf"/>
</dbReference>
<dbReference type="InterPro" id="IPR002150">
    <property type="entry name" value="Ribosomal_bL31"/>
</dbReference>
<dbReference type="InterPro" id="IPR027493">
    <property type="entry name" value="Ribosomal_bL31_B"/>
</dbReference>
<dbReference type="InterPro" id="IPR042105">
    <property type="entry name" value="Ribosomal_bL31_sf"/>
</dbReference>
<dbReference type="NCBIfam" id="TIGR00105">
    <property type="entry name" value="L31"/>
    <property type="match status" value="1"/>
</dbReference>
<dbReference type="NCBIfam" id="NF002462">
    <property type="entry name" value="PRK01678.1"/>
    <property type="match status" value="1"/>
</dbReference>
<dbReference type="PANTHER" id="PTHR33280">
    <property type="entry name" value="50S RIBOSOMAL PROTEIN L31, CHLOROPLASTIC"/>
    <property type="match status" value="1"/>
</dbReference>
<dbReference type="PANTHER" id="PTHR33280:SF1">
    <property type="entry name" value="LARGE RIBOSOMAL SUBUNIT PROTEIN BL31C"/>
    <property type="match status" value="1"/>
</dbReference>
<dbReference type="Pfam" id="PF01197">
    <property type="entry name" value="Ribosomal_L31"/>
    <property type="match status" value="1"/>
</dbReference>
<dbReference type="PRINTS" id="PR01249">
    <property type="entry name" value="RIBOSOMALL31"/>
</dbReference>
<dbReference type="SUPFAM" id="SSF143800">
    <property type="entry name" value="L28p-like"/>
    <property type="match status" value="1"/>
</dbReference>
<sequence length="86" mass="9815">MKPDIHPVYRTVVFHDTSANEYVKVGSTIKTEREIELDGVTYPYVTIDVSSKSHPFYTGRQKTFDSESSAARFQKRFGHFIGAKRG</sequence>
<proteinExistence type="inferred from homology"/>
<reference key="1">
    <citation type="journal article" date="2009" name="PLoS ONE">
        <title>Salmonella paratyphi C: genetic divergence from Salmonella choleraesuis and pathogenic convergence with Salmonella typhi.</title>
        <authorList>
            <person name="Liu W.-Q."/>
            <person name="Feng Y."/>
            <person name="Wang Y."/>
            <person name="Zou Q.-H."/>
            <person name="Chen F."/>
            <person name="Guo J.-T."/>
            <person name="Peng Y.-H."/>
            <person name="Jin Y."/>
            <person name="Li Y.-G."/>
            <person name="Hu S.-N."/>
            <person name="Johnston R.N."/>
            <person name="Liu G.-R."/>
            <person name="Liu S.-L."/>
        </authorList>
    </citation>
    <scope>NUCLEOTIDE SEQUENCE [LARGE SCALE GENOMIC DNA]</scope>
    <source>
        <strain>RKS4594</strain>
    </source>
</reference>
<organism>
    <name type="scientific">Salmonella paratyphi C (strain RKS4594)</name>
    <dbReference type="NCBI Taxonomy" id="476213"/>
    <lineage>
        <taxon>Bacteria</taxon>
        <taxon>Pseudomonadati</taxon>
        <taxon>Pseudomonadota</taxon>
        <taxon>Gammaproteobacteria</taxon>
        <taxon>Enterobacterales</taxon>
        <taxon>Enterobacteriaceae</taxon>
        <taxon>Salmonella</taxon>
    </lineage>
</organism>
<accession>C0Q7Z3</accession>
<feature type="chain" id="PRO_1000176991" description="Large ribosomal subunit protein bL31B">
    <location>
        <begin position="1"/>
        <end position="86"/>
    </location>
</feature>
<gene>
    <name evidence="1" type="primary">rpmE2</name>
    <name type="ordered locus">SPC_0483</name>
</gene>
<protein>
    <recommendedName>
        <fullName evidence="1">Large ribosomal subunit protein bL31B</fullName>
    </recommendedName>
    <alternativeName>
        <fullName evidence="2">50S ribosomal protein L31 type B</fullName>
    </alternativeName>
</protein>
<keyword id="KW-0687">Ribonucleoprotein</keyword>
<keyword id="KW-0689">Ribosomal protein</keyword>